<keyword id="KW-0903">Direct protein sequencing</keyword>
<keyword id="KW-0527">Neuropeptide</keyword>
<protein>
    <recommendedName>
        <fullName>Peptide hormone 2</fullName>
    </recommendedName>
    <alternativeName>
        <fullName>Pea-VEAacid 2</fullName>
    </alternativeName>
</protein>
<proteinExistence type="evidence at protein level"/>
<sequence>LDLTPGSHVDSYVEA</sequence>
<accession>P82695</accession>
<dbReference type="GO" id="GO:0005576">
    <property type="term" value="C:extracellular region"/>
    <property type="evidence" value="ECO:0007669"/>
    <property type="project" value="InterPro"/>
</dbReference>
<dbReference type="GO" id="GO:0005184">
    <property type="term" value="F:neuropeptide hormone activity"/>
    <property type="evidence" value="ECO:0007669"/>
    <property type="project" value="InterPro"/>
</dbReference>
<dbReference type="GO" id="GO:0007218">
    <property type="term" value="P:neuropeptide signaling pathway"/>
    <property type="evidence" value="ECO:0007669"/>
    <property type="project" value="UniProtKB-KW"/>
</dbReference>
<dbReference type="InterPro" id="IPR012593">
    <property type="entry name" value="Pea-VEAacid"/>
</dbReference>
<dbReference type="Pfam" id="PF08111">
    <property type="entry name" value="Pea-VEAacid"/>
    <property type="match status" value="1"/>
</dbReference>
<organism>
    <name type="scientific">Periplaneta americana</name>
    <name type="common">American cockroach</name>
    <name type="synonym">Blatta americana</name>
    <dbReference type="NCBI Taxonomy" id="6978"/>
    <lineage>
        <taxon>Eukaryota</taxon>
        <taxon>Metazoa</taxon>
        <taxon>Ecdysozoa</taxon>
        <taxon>Arthropoda</taxon>
        <taxon>Hexapoda</taxon>
        <taxon>Insecta</taxon>
        <taxon>Pterygota</taxon>
        <taxon>Neoptera</taxon>
        <taxon>Polyneoptera</taxon>
        <taxon>Dictyoptera</taxon>
        <taxon>Blattodea</taxon>
        <taxon>Blattoidea</taxon>
        <taxon>Blattidae</taxon>
        <taxon>Blattinae</taxon>
        <taxon>Periplaneta</taxon>
    </lineage>
</organism>
<name>PH2_PERAM</name>
<feature type="peptide" id="PRO_0000044203" description="Peptide hormone 2">
    <location>
        <begin position="1"/>
        <end position="15"/>
    </location>
</feature>
<reference key="1">
    <citation type="submission" date="2000-07" db="UniProtKB">
        <authorList>
            <person name="Predel R."/>
        </authorList>
    </citation>
    <scope>PROTEIN SEQUENCE</scope>
    <source>
        <tissue>Abdominal perisympathetic organs</tissue>
    </source>
</reference>